<dbReference type="EMBL" id="CP000087">
    <property type="protein sequence ID" value="ABE05377.1"/>
    <property type="molecule type" value="Genomic_DNA"/>
</dbReference>
<dbReference type="RefSeq" id="WP_011477947.1">
    <property type="nucleotide sequence ID" value="NC_007940.1"/>
</dbReference>
<dbReference type="SMR" id="Q1RGY7"/>
<dbReference type="KEGG" id="rbe:RBE_1296"/>
<dbReference type="eggNOG" id="COG1952">
    <property type="taxonomic scope" value="Bacteria"/>
</dbReference>
<dbReference type="HOGENOM" id="CLU_111574_0_0_5"/>
<dbReference type="OrthoDB" id="9795145at2"/>
<dbReference type="Proteomes" id="UP000001951">
    <property type="component" value="Chromosome"/>
</dbReference>
<dbReference type="GO" id="GO:0005737">
    <property type="term" value="C:cytoplasm"/>
    <property type="evidence" value="ECO:0007669"/>
    <property type="project" value="UniProtKB-SubCell"/>
</dbReference>
<dbReference type="GO" id="GO:0051082">
    <property type="term" value="F:unfolded protein binding"/>
    <property type="evidence" value="ECO:0007669"/>
    <property type="project" value="InterPro"/>
</dbReference>
<dbReference type="GO" id="GO:0006457">
    <property type="term" value="P:protein folding"/>
    <property type="evidence" value="ECO:0007669"/>
    <property type="project" value="UniProtKB-UniRule"/>
</dbReference>
<dbReference type="GO" id="GO:0051262">
    <property type="term" value="P:protein tetramerization"/>
    <property type="evidence" value="ECO:0007669"/>
    <property type="project" value="InterPro"/>
</dbReference>
<dbReference type="GO" id="GO:0015031">
    <property type="term" value="P:protein transport"/>
    <property type="evidence" value="ECO:0007669"/>
    <property type="project" value="UniProtKB-UniRule"/>
</dbReference>
<dbReference type="CDD" id="cd00557">
    <property type="entry name" value="Translocase_SecB"/>
    <property type="match status" value="1"/>
</dbReference>
<dbReference type="Gene3D" id="3.10.420.10">
    <property type="entry name" value="SecB-like"/>
    <property type="match status" value="1"/>
</dbReference>
<dbReference type="HAMAP" id="MF_00821">
    <property type="entry name" value="SecB"/>
    <property type="match status" value="1"/>
</dbReference>
<dbReference type="InterPro" id="IPR003708">
    <property type="entry name" value="SecB"/>
</dbReference>
<dbReference type="InterPro" id="IPR035958">
    <property type="entry name" value="SecB-like_sf"/>
</dbReference>
<dbReference type="NCBIfam" id="NF004392">
    <property type="entry name" value="PRK05751.1-3"/>
    <property type="match status" value="1"/>
</dbReference>
<dbReference type="NCBIfam" id="TIGR00809">
    <property type="entry name" value="secB"/>
    <property type="match status" value="1"/>
</dbReference>
<dbReference type="PANTHER" id="PTHR36918">
    <property type="match status" value="1"/>
</dbReference>
<dbReference type="PANTHER" id="PTHR36918:SF1">
    <property type="entry name" value="PROTEIN-EXPORT PROTEIN SECB"/>
    <property type="match status" value="1"/>
</dbReference>
<dbReference type="Pfam" id="PF02556">
    <property type="entry name" value="SecB"/>
    <property type="match status" value="1"/>
</dbReference>
<dbReference type="PRINTS" id="PR01594">
    <property type="entry name" value="SECBCHAPRONE"/>
</dbReference>
<dbReference type="SUPFAM" id="SSF54611">
    <property type="entry name" value="SecB-like"/>
    <property type="match status" value="1"/>
</dbReference>
<proteinExistence type="inferred from homology"/>
<accession>Q1RGY7</accession>
<reference key="1">
    <citation type="journal article" date="2006" name="PLoS Genet.">
        <title>Genome sequence of Rickettsia bellii illuminates the role of amoebae in gene exchanges between intracellular pathogens.</title>
        <authorList>
            <person name="Ogata H."/>
            <person name="La Scola B."/>
            <person name="Audic S."/>
            <person name="Renesto P."/>
            <person name="Blanc G."/>
            <person name="Robert C."/>
            <person name="Fournier P.-E."/>
            <person name="Claverie J.-M."/>
            <person name="Raoult D."/>
        </authorList>
    </citation>
    <scope>NUCLEOTIDE SEQUENCE [LARGE SCALE GENOMIC DNA]</scope>
    <source>
        <strain>RML369-C</strain>
    </source>
</reference>
<feature type="chain" id="PRO_0000273145" description="Protein-export protein SecB">
    <location>
        <begin position="1"/>
        <end position="152"/>
    </location>
</feature>
<organism>
    <name type="scientific">Rickettsia bellii (strain RML369-C)</name>
    <dbReference type="NCBI Taxonomy" id="336407"/>
    <lineage>
        <taxon>Bacteria</taxon>
        <taxon>Pseudomonadati</taxon>
        <taxon>Pseudomonadota</taxon>
        <taxon>Alphaproteobacteria</taxon>
        <taxon>Rickettsiales</taxon>
        <taxon>Rickettsiaceae</taxon>
        <taxon>Rickettsieae</taxon>
        <taxon>Rickettsia</taxon>
        <taxon>belli group</taxon>
    </lineage>
</organism>
<comment type="function">
    <text evidence="1">One of the proteins required for the normal export of preproteins out of the cell cytoplasm. It is a molecular chaperone that binds to a subset of precursor proteins, maintaining them in a translocation-competent state. It also specifically binds to its receptor SecA.</text>
</comment>
<comment type="subunit">
    <text evidence="1">Homotetramer, a dimer of dimers. One homotetramer interacts with 1 SecA dimer.</text>
</comment>
<comment type="subcellular location">
    <subcellularLocation>
        <location evidence="1">Cytoplasm</location>
    </subcellularLocation>
</comment>
<comment type="similarity">
    <text evidence="1">Belongs to the SecB family.</text>
</comment>
<gene>
    <name evidence="1" type="primary">secB</name>
    <name type="ordered locus">RBE_1296</name>
</gene>
<protein>
    <recommendedName>
        <fullName evidence="1">Protein-export protein SecB</fullName>
    </recommendedName>
</protein>
<name>SECB_RICBR</name>
<evidence type="ECO:0000255" key="1">
    <source>
        <dbReference type="HAMAP-Rule" id="MF_00821"/>
    </source>
</evidence>
<keyword id="KW-0143">Chaperone</keyword>
<keyword id="KW-0963">Cytoplasm</keyword>
<keyword id="KW-0653">Protein transport</keyword>
<keyword id="KW-0811">Translocation</keyword>
<keyword id="KW-0813">Transport</keyword>
<sequence length="152" mass="17156">MSTINTDANEAMPHISVNAQYIKDLSLENPDAPSSLAALEHRPQIDLSLDINITNLSEENFYEVELNIEAVARNEKYKLFQVELKYAGVFNLINIAPEQHQILLSVHCPAMIFPFARKIIASCTQDAGFQPLMIDPIDFGALYHKKMSEHQN</sequence>